<reference key="1">
    <citation type="journal article" date="2013" name="Nat. Commun.">
        <title>The genome of Mesobuthus martensii reveals a unique adaptation model of arthropods.</title>
        <authorList>
            <person name="Cao Z."/>
            <person name="Yu Y."/>
            <person name="Wu Y."/>
            <person name="Hao P."/>
            <person name="Di Z."/>
            <person name="He Y."/>
            <person name="Chen Z."/>
            <person name="Yang W."/>
            <person name="Shen Z."/>
            <person name="He X."/>
            <person name="Sheng J."/>
            <person name="Xu X."/>
            <person name="Pan B."/>
            <person name="Feng J."/>
            <person name="Yang X."/>
            <person name="Hong W."/>
            <person name="Zhao W."/>
            <person name="Li Z."/>
            <person name="Huang K."/>
            <person name="Li T."/>
            <person name="Kong Y."/>
            <person name="Liu H."/>
            <person name="Jiang D."/>
            <person name="Zhang B."/>
            <person name="Hu J."/>
            <person name="Hu Y."/>
            <person name="Wang B."/>
            <person name="Dai J."/>
            <person name="Yuan B."/>
            <person name="Feng Y."/>
            <person name="Huang W."/>
            <person name="Xing X."/>
            <person name="Zhao G."/>
            <person name="Li X."/>
            <person name="Li Y."/>
            <person name="Li W."/>
        </authorList>
    </citation>
    <scope>NUCLEOTIDE SEQUENCE [LARGE SCALE GENOMIC DNA]</scope>
    <source>
        <tissue>Muscle</tissue>
    </source>
</reference>
<reference evidence="8" key="2">
    <citation type="journal article" date="2020" name="Int. J. Biol. Macromol.">
        <title>Ion channel modulation by scorpion hemolymph and its defensin ingredients highlights origin of neurotoxins in telson formed in Paleozoic scorpions.</title>
        <authorList>
            <person name="Meng L."/>
            <person name="Zhao Y."/>
            <person name="Qu D."/>
            <person name="Xie Z."/>
            <person name="Guo X."/>
            <person name="Zhu Z."/>
            <person name="Chen Z."/>
            <person name="Zhang L."/>
            <person name="Li W."/>
            <person name="Cao Z."/>
            <person name="Tian C."/>
            <person name="Wu Y."/>
        </authorList>
    </citation>
    <scope>STRUCTURE BY NMR</scope>
    <scope>FUNCTION</scope>
    <scope>SYNTHESIS OF 25-62</scope>
    <scope>DISULFIDE BONDS</scope>
    <scope>TISSUE SPECIFICITY</scope>
    <source>
        <tissue>Hemolymph</tissue>
        <tissue>Venom gland</tissue>
    </source>
</reference>
<feature type="signal peptide" evidence="1">
    <location>
        <begin position="1"/>
        <end position="24"/>
    </location>
</feature>
<feature type="chain" id="PRO_0000455527" description="Defensin BmKDfsin3" evidence="6">
    <location>
        <begin position="25"/>
        <end position="62"/>
    </location>
</feature>
<feature type="disulfide bond" evidence="3 9">
    <location>
        <begin position="28"/>
        <end position="49"/>
    </location>
</feature>
<feature type="disulfide bond" evidence="3 9">
    <location>
        <begin position="35"/>
        <end position="57"/>
    </location>
</feature>
<feature type="disulfide bond" evidence="3 9">
    <location>
        <begin position="39"/>
        <end position="59"/>
    </location>
</feature>
<feature type="helix" evidence="10">
    <location>
        <begin position="32"/>
        <end position="40"/>
    </location>
</feature>
<feature type="turn" evidence="10">
    <location>
        <begin position="41"/>
        <end position="43"/>
    </location>
</feature>
<feature type="strand" evidence="10">
    <location>
        <begin position="52"/>
        <end position="54"/>
    </location>
</feature>
<evidence type="ECO:0000255" key="1"/>
<evidence type="ECO:0000255" key="2">
    <source>
        <dbReference type="PROSITE-ProRule" id="PRU00710"/>
    </source>
</evidence>
<evidence type="ECO:0000269" key="3">
    <source>
    </source>
</evidence>
<evidence type="ECO:0000303" key="4">
    <source>
    </source>
</evidence>
<evidence type="ECO:0000303" key="5">
    <source>
    </source>
</evidence>
<evidence type="ECO:0000305" key="6">
    <source>
    </source>
</evidence>
<evidence type="ECO:0000305" key="7">
    <source>
    </source>
</evidence>
<evidence type="ECO:0000312" key="8">
    <source>
        <dbReference type="PDB" id="5XA6"/>
    </source>
</evidence>
<evidence type="ECO:0007744" key="9">
    <source>
        <dbReference type="PDB" id="5XA6"/>
    </source>
</evidence>
<evidence type="ECO:0007829" key="10">
    <source>
        <dbReference type="PDB" id="5XA6"/>
    </source>
</evidence>
<name>DEF3_OLIMR</name>
<protein>
    <recommendedName>
        <fullName evidence="4 5">Defensin BmKDfsin3</fullName>
    </recommendedName>
</protein>
<sequence>MKTIVILFVLALVFCTLEMGMVEAGFGCPFNQGKCHRHCRSIRRRGGYCDGFLKQRCVCYRK</sequence>
<proteinExistence type="evidence at protein level"/>
<organism>
    <name type="scientific">Olivierus martensii</name>
    <name type="common">Manchurian scorpion</name>
    <name type="synonym">Mesobuthus martensii</name>
    <dbReference type="NCBI Taxonomy" id="34649"/>
    <lineage>
        <taxon>Eukaryota</taxon>
        <taxon>Metazoa</taxon>
        <taxon>Ecdysozoa</taxon>
        <taxon>Arthropoda</taxon>
        <taxon>Chelicerata</taxon>
        <taxon>Arachnida</taxon>
        <taxon>Scorpiones</taxon>
        <taxon>Buthida</taxon>
        <taxon>Buthoidea</taxon>
        <taxon>Buthidae</taxon>
        <taxon>Olivierus</taxon>
    </lineage>
</organism>
<dbReference type="PDB" id="5XA6">
    <property type="method" value="NMR"/>
    <property type="chains" value="A=25-62"/>
</dbReference>
<dbReference type="PDBsum" id="5XA6"/>
<dbReference type="SMR" id="A0A384E0Y8"/>
<dbReference type="GO" id="GO:0005576">
    <property type="term" value="C:extracellular region"/>
    <property type="evidence" value="ECO:0007669"/>
    <property type="project" value="UniProtKB-SubCell"/>
</dbReference>
<dbReference type="GO" id="GO:0015459">
    <property type="term" value="F:potassium channel regulator activity"/>
    <property type="evidence" value="ECO:0007669"/>
    <property type="project" value="UniProtKB-KW"/>
</dbReference>
<dbReference type="GO" id="GO:0090729">
    <property type="term" value="F:toxin activity"/>
    <property type="evidence" value="ECO:0007669"/>
    <property type="project" value="UniProtKB-KW"/>
</dbReference>
<dbReference type="GO" id="GO:0042742">
    <property type="term" value="P:defense response to bacterium"/>
    <property type="evidence" value="ECO:0007669"/>
    <property type="project" value="UniProtKB-KW"/>
</dbReference>
<dbReference type="GO" id="GO:0045087">
    <property type="term" value="P:innate immune response"/>
    <property type="evidence" value="ECO:0007669"/>
    <property type="project" value="UniProtKB-KW"/>
</dbReference>
<dbReference type="Gene3D" id="3.30.30.10">
    <property type="entry name" value="Knottin, scorpion toxin-like"/>
    <property type="match status" value="1"/>
</dbReference>
<dbReference type="InterPro" id="IPR001542">
    <property type="entry name" value="Defensin_invertebrate/fungal"/>
</dbReference>
<dbReference type="InterPro" id="IPR036574">
    <property type="entry name" value="Scorpion_toxin-like_sf"/>
</dbReference>
<dbReference type="Pfam" id="PF01097">
    <property type="entry name" value="Defensin_2"/>
    <property type="match status" value="1"/>
</dbReference>
<dbReference type="SUPFAM" id="SSF57095">
    <property type="entry name" value="Scorpion toxin-like"/>
    <property type="match status" value="1"/>
</dbReference>
<dbReference type="PROSITE" id="PS51378">
    <property type="entry name" value="INVERT_DEFENSINS"/>
    <property type="match status" value="1"/>
</dbReference>
<keyword id="KW-0002">3D-structure</keyword>
<keyword id="KW-0044">Antibiotic</keyword>
<keyword id="KW-0929">Antimicrobial</keyword>
<keyword id="KW-1221">Calcium-activated potassium channel impairing toxin</keyword>
<keyword id="KW-0211">Defensin</keyword>
<keyword id="KW-1015">Disulfide bond</keyword>
<keyword id="KW-0391">Immunity</keyword>
<keyword id="KW-0399">Innate immunity</keyword>
<keyword id="KW-0872">Ion channel impairing toxin</keyword>
<keyword id="KW-0632">Potassium channel impairing toxin</keyword>
<keyword id="KW-0964">Secreted</keyword>
<keyword id="KW-0732">Signal</keyword>
<keyword id="KW-0800">Toxin</keyword>
<keyword id="KW-1220">Voltage-gated potassium channel impairing toxin</keyword>
<accession>A0A384E0Y8</accession>
<comment type="function">
    <text evidence="3">Antibacterial peptide active against Gram-positive bacteria (including S.aureus ATCC25923 (MIC=2.5 uM), M.luteus AB93113 (MIC=2.5 uM), and the antibiotic-resistant S.epidermidis PRSE P1389 (MIC=1.25 uM)), but not against Gram-negative bacteria (including E.coli and P.aeruginosa) (PubMed:31954123). Also blocks the currents of Kv1.1/KCNA1 (57% inhibition), Kv1.2/KCNA2 (27.5% inhibition), Kv1.3/KCNA3 (IC(50)=23.4 nM, 84.3% inhibition), KCa3.1/KCNN4/IK (15% inhibition), KCa2.3/KCNN3/SK3 (87.5% inhibition) and Kv11.1/KCNH2/ERG1 (30.4% inhibition) channels (tested at 1 uM) (PubMed:31954123). It inhibits potassium channel current by interacting with the pore region (PubMed:31954123).</text>
</comment>
<comment type="subcellular location">
    <subcellularLocation>
        <location evidence="7">Secreted</location>
    </subcellularLocation>
</comment>
<comment type="tissue specificity">
    <text evidence="3">Low expression in both venom and non-venom glands (hemolymph).</text>
</comment>
<comment type="similarity">
    <text evidence="2">Belongs to the invertebrate defensin family. Type 2 subfamily.</text>
</comment>